<sequence>GFFALIPKIISSPLFKTLLSAVGSALSSSGEQE</sequence>
<protein>
    <recommendedName>
        <fullName>Pardaxin P-1</fullName>
    </recommendedName>
    <alternativeName>
        <fullName>Pardaxin Pa1</fullName>
    </alternativeName>
</protein>
<evidence type="ECO:0000305" key="1"/>
<organism>
    <name type="scientific">Pardachirus pavoninus</name>
    <name type="common">Peacock sole</name>
    <name type="synonym">Achirus pavoninus</name>
    <dbReference type="NCBI Taxonomy" id="8286"/>
    <lineage>
        <taxon>Eukaryota</taxon>
        <taxon>Metazoa</taxon>
        <taxon>Chordata</taxon>
        <taxon>Craniata</taxon>
        <taxon>Vertebrata</taxon>
        <taxon>Euteleostomi</taxon>
        <taxon>Actinopterygii</taxon>
        <taxon>Neopterygii</taxon>
        <taxon>Teleostei</taxon>
        <taxon>Neoteleostei</taxon>
        <taxon>Acanthomorphata</taxon>
        <taxon>Carangaria</taxon>
        <taxon>Pleuronectiformes</taxon>
        <taxon>Pleuronectoidei</taxon>
        <taxon>Soleidae</taxon>
        <taxon>Pardachirus</taxon>
    </lineage>
</organism>
<feature type="peptide" id="PRO_0000044782" description="Pardaxin P-1">
    <location>
        <begin position="1"/>
        <end position="33"/>
    </location>
</feature>
<accession>P81865</accession>
<keyword id="KW-0903">Direct protein sequencing</keyword>
<keyword id="KW-0406">Ion transport</keyword>
<keyword id="KW-0472">Membrane</keyword>
<keyword id="KW-0964">Secreted</keyword>
<keyword id="KW-1052">Target cell membrane</keyword>
<keyword id="KW-1053">Target membrane</keyword>
<keyword id="KW-0800">Toxin</keyword>
<keyword id="KW-0812">Transmembrane</keyword>
<keyword id="KW-0813">Transport</keyword>
<comment type="function">
    <text>Exhibits unusual shark repellent and surfactant properties. Forms voltage-dependent, ion-permeable channels in membranes. At high concentration causes cell membrane lysis. Causes death in killfish oryzias latipes in 30 minutes at a concentration of 25 micrograms/ml.</text>
</comment>
<comment type="subunit">
    <text>In aqueous solution exists as a tetramer.</text>
</comment>
<comment type="subcellular location">
    <subcellularLocation>
        <location>Secreted</location>
    </subcellularLocation>
    <subcellularLocation>
        <location>Target cell membrane</location>
    </subcellularLocation>
    <text>Forms a helical membrane channel in the prey.</text>
</comment>
<comment type="domain">
    <text>Consists of a C-terminal hydrophilic region and a predominantly hydrophobic remainder.</text>
</comment>
<comment type="similarity">
    <text evidence="1">Belongs to the pardaxin family.</text>
</comment>
<proteinExistence type="evidence at protein level"/>
<name>PAP1_PARPV</name>
<dbReference type="PIR" id="A60907">
    <property type="entry name" value="A60907"/>
</dbReference>
<dbReference type="GO" id="GO:0005576">
    <property type="term" value="C:extracellular region"/>
    <property type="evidence" value="ECO:0007669"/>
    <property type="project" value="UniProtKB-SubCell"/>
</dbReference>
<dbReference type="GO" id="GO:0016020">
    <property type="term" value="C:membrane"/>
    <property type="evidence" value="ECO:0007669"/>
    <property type="project" value="UniProtKB-KW"/>
</dbReference>
<dbReference type="GO" id="GO:0044218">
    <property type="term" value="C:other organism cell membrane"/>
    <property type="evidence" value="ECO:0007669"/>
    <property type="project" value="UniProtKB-KW"/>
</dbReference>
<dbReference type="GO" id="GO:0090729">
    <property type="term" value="F:toxin activity"/>
    <property type="evidence" value="ECO:0007669"/>
    <property type="project" value="UniProtKB-KW"/>
</dbReference>
<dbReference type="GO" id="GO:0006811">
    <property type="term" value="P:monoatomic ion transport"/>
    <property type="evidence" value="ECO:0007669"/>
    <property type="project" value="UniProtKB-KW"/>
</dbReference>
<dbReference type="InterPro" id="IPR009990">
    <property type="entry name" value="Pardaxin"/>
</dbReference>
<dbReference type="Pfam" id="PF07425">
    <property type="entry name" value="Pardaxin"/>
    <property type="match status" value="1"/>
</dbReference>
<dbReference type="PIRSF" id="PIRSF037561">
    <property type="entry name" value="Pardaxin"/>
    <property type="match status" value="1"/>
</dbReference>
<reference key="1">
    <citation type="journal article" date="1986" name="Science">
        <title>Melittin-like peptides from the shark-repelling defense secretion of the sole Pardachirus pavoninus.</title>
        <authorList>
            <person name="Thompson S.A."/>
            <person name="Tachibana K."/>
            <person name="Nakanishi K."/>
            <person name="Kubota I."/>
        </authorList>
    </citation>
    <scope>PROTEIN SEQUENCE</scope>
</reference>